<accession>Q8DQ32</accession>
<evidence type="ECO:0000255" key="1">
    <source>
        <dbReference type="HAMAP-Rule" id="MF_00376"/>
    </source>
</evidence>
<evidence type="ECO:0000305" key="2"/>
<proteinExistence type="inferred from homology"/>
<protein>
    <recommendedName>
        <fullName evidence="1">Dephospho-CoA kinase</fullName>
        <ecNumber evidence="1">2.7.1.24</ecNumber>
    </recommendedName>
    <alternativeName>
        <fullName evidence="1">Dephosphocoenzyme A kinase</fullName>
    </alternativeName>
</protein>
<dbReference type="EC" id="2.7.1.24" evidence="1"/>
<dbReference type="EMBL" id="AE007317">
    <property type="protein sequence ID" value="AAK99677.1"/>
    <property type="status" value="ALT_INIT"/>
    <property type="molecule type" value="Genomic_DNA"/>
</dbReference>
<dbReference type="PIR" id="A97981">
    <property type="entry name" value="A97981"/>
</dbReference>
<dbReference type="RefSeq" id="NP_358467.1">
    <property type="nucleotide sequence ID" value="NC_003098.1"/>
</dbReference>
<dbReference type="RefSeq" id="WP_000516190.1">
    <property type="nucleotide sequence ID" value="NC_003098.1"/>
</dbReference>
<dbReference type="SMR" id="Q8DQ32"/>
<dbReference type="STRING" id="171101.spr0873"/>
<dbReference type="GeneID" id="45653687"/>
<dbReference type="KEGG" id="spr:spr0873"/>
<dbReference type="PATRIC" id="fig|171101.6.peg.961"/>
<dbReference type="eggNOG" id="COG0237">
    <property type="taxonomic scope" value="Bacteria"/>
</dbReference>
<dbReference type="HOGENOM" id="CLU_057180_0_0_9"/>
<dbReference type="UniPathway" id="UPA00241">
    <property type="reaction ID" value="UER00356"/>
</dbReference>
<dbReference type="Proteomes" id="UP000000586">
    <property type="component" value="Chromosome"/>
</dbReference>
<dbReference type="GO" id="GO:0005737">
    <property type="term" value="C:cytoplasm"/>
    <property type="evidence" value="ECO:0007669"/>
    <property type="project" value="UniProtKB-SubCell"/>
</dbReference>
<dbReference type="GO" id="GO:0005524">
    <property type="term" value="F:ATP binding"/>
    <property type="evidence" value="ECO:0007669"/>
    <property type="project" value="UniProtKB-UniRule"/>
</dbReference>
<dbReference type="GO" id="GO:0004140">
    <property type="term" value="F:dephospho-CoA kinase activity"/>
    <property type="evidence" value="ECO:0000318"/>
    <property type="project" value="GO_Central"/>
</dbReference>
<dbReference type="GO" id="GO:0015937">
    <property type="term" value="P:coenzyme A biosynthetic process"/>
    <property type="evidence" value="ECO:0000318"/>
    <property type="project" value="GO_Central"/>
</dbReference>
<dbReference type="CDD" id="cd02022">
    <property type="entry name" value="DPCK"/>
    <property type="match status" value="1"/>
</dbReference>
<dbReference type="FunFam" id="3.40.50.300:FF:000991">
    <property type="entry name" value="Dephospho-CoA kinase"/>
    <property type="match status" value="1"/>
</dbReference>
<dbReference type="Gene3D" id="3.40.50.300">
    <property type="entry name" value="P-loop containing nucleotide triphosphate hydrolases"/>
    <property type="match status" value="1"/>
</dbReference>
<dbReference type="HAMAP" id="MF_00376">
    <property type="entry name" value="Dephospho_CoA_kinase"/>
    <property type="match status" value="1"/>
</dbReference>
<dbReference type="InterPro" id="IPR001977">
    <property type="entry name" value="Depp_CoAkinase"/>
</dbReference>
<dbReference type="InterPro" id="IPR027417">
    <property type="entry name" value="P-loop_NTPase"/>
</dbReference>
<dbReference type="NCBIfam" id="TIGR00152">
    <property type="entry name" value="dephospho-CoA kinase"/>
    <property type="match status" value="1"/>
</dbReference>
<dbReference type="PANTHER" id="PTHR10695:SF46">
    <property type="entry name" value="BIFUNCTIONAL COENZYME A SYNTHASE-RELATED"/>
    <property type="match status" value="1"/>
</dbReference>
<dbReference type="PANTHER" id="PTHR10695">
    <property type="entry name" value="DEPHOSPHO-COA KINASE-RELATED"/>
    <property type="match status" value="1"/>
</dbReference>
<dbReference type="Pfam" id="PF01121">
    <property type="entry name" value="CoaE"/>
    <property type="match status" value="1"/>
</dbReference>
<dbReference type="SUPFAM" id="SSF52540">
    <property type="entry name" value="P-loop containing nucleoside triphosphate hydrolases"/>
    <property type="match status" value="1"/>
</dbReference>
<dbReference type="PROSITE" id="PS51219">
    <property type="entry name" value="DPCK"/>
    <property type="match status" value="1"/>
</dbReference>
<keyword id="KW-0067">ATP-binding</keyword>
<keyword id="KW-0173">Coenzyme A biosynthesis</keyword>
<keyword id="KW-0963">Cytoplasm</keyword>
<keyword id="KW-0418">Kinase</keyword>
<keyword id="KW-0547">Nucleotide-binding</keyword>
<keyword id="KW-1185">Reference proteome</keyword>
<keyword id="KW-0808">Transferase</keyword>
<gene>
    <name evidence="1" type="primary">coaE</name>
    <name type="ordered locus">spr0873</name>
</gene>
<reference key="1">
    <citation type="journal article" date="2001" name="J. Bacteriol.">
        <title>Genome of the bacterium Streptococcus pneumoniae strain R6.</title>
        <authorList>
            <person name="Hoskins J."/>
            <person name="Alborn W.E. Jr."/>
            <person name="Arnold J."/>
            <person name="Blaszczak L.C."/>
            <person name="Burgett S."/>
            <person name="DeHoff B.S."/>
            <person name="Estrem S.T."/>
            <person name="Fritz L."/>
            <person name="Fu D.-J."/>
            <person name="Fuller W."/>
            <person name="Geringer C."/>
            <person name="Gilmour R."/>
            <person name="Glass J.S."/>
            <person name="Khoja H."/>
            <person name="Kraft A.R."/>
            <person name="Lagace R.E."/>
            <person name="LeBlanc D.J."/>
            <person name="Lee L.N."/>
            <person name="Lefkowitz E.J."/>
            <person name="Lu J."/>
            <person name="Matsushima P."/>
            <person name="McAhren S.M."/>
            <person name="McHenney M."/>
            <person name="McLeaster K."/>
            <person name="Mundy C.W."/>
            <person name="Nicas T.I."/>
            <person name="Norris F.H."/>
            <person name="O'Gara M."/>
            <person name="Peery R.B."/>
            <person name="Robertson G.T."/>
            <person name="Rockey P."/>
            <person name="Sun P.-M."/>
            <person name="Winkler M.E."/>
            <person name="Yang Y."/>
            <person name="Young-Bellido M."/>
            <person name="Zhao G."/>
            <person name="Zook C.A."/>
            <person name="Baltz R.H."/>
            <person name="Jaskunas S.R."/>
            <person name="Rosteck P.R. Jr."/>
            <person name="Skatrud P.L."/>
            <person name="Glass J.I."/>
        </authorList>
    </citation>
    <scope>NUCLEOTIDE SEQUENCE [LARGE SCALE GENOMIC DNA]</scope>
    <source>
        <strain>ATCC BAA-255 / R6</strain>
    </source>
</reference>
<comment type="function">
    <text evidence="1">Catalyzes the phosphorylation of the 3'-hydroxyl group of dephosphocoenzyme A to form coenzyme A.</text>
</comment>
<comment type="catalytic activity">
    <reaction evidence="1">
        <text>3'-dephospho-CoA + ATP = ADP + CoA + H(+)</text>
        <dbReference type="Rhea" id="RHEA:18245"/>
        <dbReference type="ChEBI" id="CHEBI:15378"/>
        <dbReference type="ChEBI" id="CHEBI:30616"/>
        <dbReference type="ChEBI" id="CHEBI:57287"/>
        <dbReference type="ChEBI" id="CHEBI:57328"/>
        <dbReference type="ChEBI" id="CHEBI:456216"/>
        <dbReference type="EC" id="2.7.1.24"/>
    </reaction>
</comment>
<comment type="pathway">
    <text evidence="1">Cofactor biosynthesis; coenzyme A biosynthesis; CoA from (R)-pantothenate: step 5/5.</text>
</comment>
<comment type="subcellular location">
    <subcellularLocation>
        <location evidence="1">Cytoplasm</location>
    </subcellularLocation>
</comment>
<comment type="similarity">
    <text evidence="1">Belongs to the CoaE family.</text>
</comment>
<comment type="sequence caution" evidence="2">
    <conflict type="erroneous initiation">
        <sequence resource="EMBL-CDS" id="AAK99677"/>
    </conflict>
</comment>
<feature type="chain" id="PRO_0000173013" description="Dephospho-CoA kinase">
    <location>
        <begin position="1"/>
        <end position="201"/>
    </location>
</feature>
<feature type="domain" description="DPCK" evidence="1">
    <location>
        <begin position="4"/>
        <end position="201"/>
    </location>
</feature>
<feature type="binding site" evidence="1">
    <location>
        <begin position="12"/>
        <end position="17"/>
    </location>
    <ligand>
        <name>ATP</name>
        <dbReference type="ChEBI" id="CHEBI:30616"/>
    </ligand>
</feature>
<name>COAE_STRR6</name>
<sequence>MGKIIGITGGIASGKSTVTNFLRQQGFQAVDADAVVHQLQKPGGRLFEALVQHFGQEIILENGELNRPLLASLIFSNPEEQKWSNQIQGEIIREELATLREQLAQTEEIFFMDIPLLFEQDYSDWFAETWLVYVDRDAQVERLMKRDQLSKDEAESRLAAQWPLEKKKDLASQVLDNNGNQNQLLNQVHILLEGGRQDDRD</sequence>
<organism>
    <name type="scientific">Streptococcus pneumoniae (strain ATCC BAA-255 / R6)</name>
    <dbReference type="NCBI Taxonomy" id="171101"/>
    <lineage>
        <taxon>Bacteria</taxon>
        <taxon>Bacillati</taxon>
        <taxon>Bacillota</taxon>
        <taxon>Bacilli</taxon>
        <taxon>Lactobacillales</taxon>
        <taxon>Streptococcaceae</taxon>
        <taxon>Streptococcus</taxon>
    </lineage>
</organism>